<keyword id="KW-0004">4Fe-4S</keyword>
<keyword id="KW-0408">Iron</keyword>
<keyword id="KW-0411">Iron-sulfur</keyword>
<keyword id="KW-0479">Metal-binding</keyword>
<keyword id="KW-0949">S-adenosyl-L-methionine</keyword>
<accession>Q0STL9</accession>
<feature type="chain" id="PRO_1000067194" description="UPF0313 protein CPR_1216">
    <location>
        <begin position="1"/>
        <end position="662"/>
    </location>
</feature>
<feature type="domain" description="Radical SAM core" evidence="2">
    <location>
        <begin position="296"/>
        <end position="567"/>
    </location>
</feature>
<feature type="region of interest" description="Disordered" evidence="3">
    <location>
        <begin position="597"/>
        <end position="662"/>
    </location>
</feature>
<feature type="compositionally biased region" description="Basic and acidic residues" evidence="3">
    <location>
        <begin position="618"/>
        <end position="632"/>
    </location>
</feature>
<feature type="compositionally biased region" description="Basic residues" evidence="3">
    <location>
        <begin position="633"/>
        <end position="644"/>
    </location>
</feature>
<feature type="binding site" evidence="1">
    <location>
        <position position="310"/>
    </location>
    <ligand>
        <name>[4Fe-4S] cluster</name>
        <dbReference type="ChEBI" id="CHEBI:49883"/>
        <note>4Fe-4S-S-AdoMet</note>
    </ligand>
</feature>
<feature type="binding site" evidence="1">
    <location>
        <position position="314"/>
    </location>
    <ligand>
        <name>[4Fe-4S] cluster</name>
        <dbReference type="ChEBI" id="CHEBI:49883"/>
        <note>4Fe-4S-S-AdoMet</note>
    </ligand>
</feature>
<feature type="binding site" evidence="1">
    <location>
        <position position="317"/>
    </location>
    <ligand>
        <name>[4Fe-4S] cluster</name>
        <dbReference type="ChEBI" id="CHEBI:49883"/>
        <note>4Fe-4S-S-AdoMet</note>
    </ligand>
</feature>
<organism>
    <name type="scientific">Clostridium perfringens (strain SM101 / Type A)</name>
    <dbReference type="NCBI Taxonomy" id="289380"/>
    <lineage>
        <taxon>Bacteria</taxon>
        <taxon>Bacillati</taxon>
        <taxon>Bacillota</taxon>
        <taxon>Clostridia</taxon>
        <taxon>Eubacteriales</taxon>
        <taxon>Clostridiaceae</taxon>
        <taxon>Clostridium</taxon>
    </lineage>
</organism>
<dbReference type="EMBL" id="CP000312">
    <property type="protein sequence ID" value="ABG86957.1"/>
    <property type="molecule type" value="Genomic_DNA"/>
</dbReference>
<dbReference type="RefSeq" id="WP_011592212.1">
    <property type="nucleotide sequence ID" value="NC_008262.1"/>
</dbReference>
<dbReference type="KEGG" id="cpr:CPR_1216"/>
<dbReference type="BioCyc" id="CPER289380:GI76-1232-MONOMER"/>
<dbReference type="Proteomes" id="UP000001824">
    <property type="component" value="Chromosome"/>
</dbReference>
<dbReference type="GO" id="GO:0051539">
    <property type="term" value="F:4 iron, 4 sulfur cluster binding"/>
    <property type="evidence" value="ECO:0007669"/>
    <property type="project" value="UniProtKB-KW"/>
</dbReference>
<dbReference type="GO" id="GO:0003824">
    <property type="term" value="F:catalytic activity"/>
    <property type="evidence" value="ECO:0007669"/>
    <property type="project" value="InterPro"/>
</dbReference>
<dbReference type="GO" id="GO:0005506">
    <property type="term" value="F:iron ion binding"/>
    <property type="evidence" value="ECO:0007669"/>
    <property type="project" value="UniProtKB-UniRule"/>
</dbReference>
<dbReference type="Gene3D" id="3.80.30.20">
    <property type="entry name" value="tm_1862 like domain"/>
    <property type="match status" value="1"/>
</dbReference>
<dbReference type="HAMAP" id="MF_01251">
    <property type="entry name" value="UPF0313"/>
    <property type="match status" value="1"/>
</dbReference>
<dbReference type="InterPro" id="IPR006638">
    <property type="entry name" value="Elp3/MiaA/NifB-like_rSAM"/>
</dbReference>
<dbReference type="InterPro" id="IPR007197">
    <property type="entry name" value="rSAM"/>
</dbReference>
<dbReference type="InterPro" id="IPR023404">
    <property type="entry name" value="rSAM_horseshoe"/>
</dbReference>
<dbReference type="InterPro" id="IPR022946">
    <property type="entry name" value="UPF0313"/>
</dbReference>
<dbReference type="InterPro" id="IPR024560">
    <property type="entry name" value="UPF0313_C"/>
</dbReference>
<dbReference type="InterPro" id="IPR013704">
    <property type="entry name" value="UPF0313_N"/>
</dbReference>
<dbReference type="NCBIfam" id="TIGR03904">
    <property type="entry name" value="SAM_YgiQ"/>
    <property type="match status" value="1"/>
</dbReference>
<dbReference type="PANTHER" id="PTHR32331">
    <property type="entry name" value="UPF0313 PROTEIN YGIQ"/>
    <property type="match status" value="1"/>
</dbReference>
<dbReference type="PANTHER" id="PTHR32331:SF0">
    <property type="entry name" value="UPF0313 PROTEIN YGIQ"/>
    <property type="match status" value="1"/>
</dbReference>
<dbReference type="Pfam" id="PF11842">
    <property type="entry name" value="DUF3362"/>
    <property type="match status" value="1"/>
</dbReference>
<dbReference type="Pfam" id="PF04055">
    <property type="entry name" value="Radical_SAM"/>
    <property type="match status" value="1"/>
</dbReference>
<dbReference type="Pfam" id="PF08497">
    <property type="entry name" value="Radical_SAM_N"/>
    <property type="match status" value="1"/>
</dbReference>
<dbReference type="SFLD" id="SFLDG01082">
    <property type="entry name" value="B12-binding_domain_containing"/>
    <property type="match status" value="1"/>
</dbReference>
<dbReference type="SFLD" id="SFLDS00029">
    <property type="entry name" value="Radical_SAM"/>
    <property type="match status" value="1"/>
</dbReference>
<dbReference type="SFLD" id="SFLDG01069">
    <property type="entry name" value="UPF0313"/>
    <property type="match status" value="1"/>
</dbReference>
<dbReference type="SMART" id="SM00729">
    <property type="entry name" value="Elp3"/>
    <property type="match status" value="1"/>
</dbReference>
<dbReference type="SUPFAM" id="SSF102114">
    <property type="entry name" value="Radical SAM enzymes"/>
    <property type="match status" value="1"/>
</dbReference>
<dbReference type="PROSITE" id="PS51918">
    <property type="entry name" value="RADICAL_SAM"/>
    <property type="match status" value="1"/>
</dbReference>
<evidence type="ECO:0000255" key="1">
    <source>
        <dbReference type="HAMAP-Rule" id="MF_01251"/>
    </source>
</evidence>
<evidence type="ECO:0000255" key="2">
    <source>
        <dbReference type="PROSITE-ProRule" id="PRU01266"/>
    </source>
</evidence>
<evidence type="ECO:0000256" key="3">
    <source>
        <dbReference type="SAM" id="MobiDB-lite"/>
    </source>
</evidence>
<comment type="cofactor">
    <cofactor evidence="1">
        <name>[4Fe-4S] cluster</name>
        <dbReference type="ChEBI" id="CHEBI:49883"/>
    </cofactor>
    <text evidence="1">Binds 1 [4Fe-4S] cluster. The cluster is coordinated with 3 cysteines and an exchangeable S-adenosyl-L-methionine.</text>
</comment>
<comment type="similarity">
    <text evidence="1">Belongs to the UPF0313 family.</text>
</comment>
<protein>
    <recommendedName>
        <fullName evidence="1">UPF0313 protein CPR_1216</fullName>
    </recommendedName>
</protein>
<name>Y1216_CLOPS</name>
<sequence length="662" mass="76156">MSENKFLPICKDDMIERGWEQCDFVLVTADAYIDHHSFGTAIISRVLENAGYKVGIIAQPDWKSVDDFKKLGRPRLGFLVNGGNMDPMVNHYTVSKKLRKKDLYTPKGEMGKRPDRATIVYCNKIREAYKDVNIVIGGIEASLRRFAHYDYWDNKVRKSILVDSGADLLVYGMSEKQIVEVADFLNQGFDGKYIRHIPGTCYIADSLDEIYEEHIVLPSFKDVSSDKRTYAECFKIQYDEQDPVRGRTLVQEHNGKYVVINKPEMPLSREELDRVYALPYQKTYHPIYEKDGGIAAIEEVKFSLVSSRGCSGNCSFCAITFHQGRIVTSRSEDSIVEEAEEITKYDDFKGYIHDIGGPTANFRKPACKKQLTLGACKHKRCMSPGICKNMEVDHREYLHLLRRVRKLPGIKKVFIRSGLRYDYIMADKDDTFFKELVEHHVSGQLKVAPEHVSPNVLKYMGKPAGKTYDEFRRKFFKITERLGKKQFIIPYLMSSHPGCKLEDAIMLAEYLRDINYQPEQVQDFYPTPGTLSTTMFYTELDPLTMEEVYIPRSKEEKAMQRALLQFKNPKNYNIVYDALVKAGREDLIGNGPKCLIRDKNSFGKGNNHSNHKSGGRKSRNENSGRRESEDKKRSSHSKKQRGNKSRGFDQKSQRVSKGKKRR</sequence>
<reference key="1">
    <citation type="journal article" date="2006" name="Genome Res.">
        <title>Skewed genomic variability in strains of the toxigenic bacterial pathogen, Clostridium perfringens.</title>
        <authorList>
            <person name="Myers G.S.A."/>
            <person name="Rasko D.A."/>
            <person name="Cheung J.K."/>
            <person name="Ravel J."/>
            <person name="Seshadri R."/>
            <person name="DeBoy R.T."/>
            <person name="Ren Q."/>
            <person name="Varga J."/>
            <person name="Awad M.M."/>
            <person name="Brinkac L.M."/>
            <person name="Daugherty S.C."/>
            <person name="Haft D.H."/>
            <person name="Dodson R.J."/>
            <person name="Madupu R."/>
            <person name="Nelson W.C."/>
            <person name="Rosovitz M.J."/>
            <person name="Sullivan S.A."/>
            <person name="Khouri H."/>
            <person name="Dimitrov G.I."/>
            <person name="Watkins K.L."/>
            <person name="Mulligan S."/>
            <person name="Benton J."/>
            <person name="Radune D."/>
            <person name="Fisher D.J."/>
            <person name="Atkins H.S."/>
            <person name="Hiscox T."/>
            <person name="Jost B.H."/>
            <person name="Billington S.J."/>
            <person name="Songer J.G."/>
            <person name="McClane B.A."/>
            <person name="Titball R.W."/>
            <person name="Rood J.I."/>
            <person name="Melville S.B."/>
            <person name="Paulsen I.T."/>
        </authorList>
    </citation>
    <scope>NUCLEOTIDE SEQUENCE [LARGE SCALE GENOMIC DNA]</scope>
    <source>
        <strain>SM101 / Type A</strain>
    </source>
</reference>
<proteinExistence type="inferred from homology"/>
<gene>
    <name type="ordered locus">CPR_1216</name>
</gene>